<dbReference type="EMBL" id="CP000886">
    <property type="protein sequence ID" value="ABX65553.1"/>
    <property type="molecule type" value="Genomic_DNA"/>
</dbReference>
<dbReference type="RefSeq" id="WP_000377175.1">
    <property type="nucleotide sequence ID" value="NC_010102.1"/>
</dbReference>
<dbReference type="SMR" id="A9MYL9"/>
<dbReference type="KEGG" id="spq:SPAB_00110"/>
<dbReference type="PATRIC" id="fig|1016998.12.peg.105"/>
<dbReference type="HOGENOM" id="CLU_005126_9_3_6"/>
<dbReference type="BioCyc" id="SENT1016998:SPAB_RS00430-MONOMER"/>
<dbReference type="Proteomes" id="UP000008556">
    <property type="component" value="Chromosome"/>
</dbReference>
<dbReference type="GO" id="GO:0005886">
    <property type="term" value="C:plasma membrane"/>
    <property type="evidence" value="ECO:0007669"/>
    <property type="project" value="UniProtKB-SubCell"/>
</dbReference>
<dbReference type="GO" id="GO:0019899">
    <property type="term" value="F:enzyme binding"/>
    <property type="evidence" value="ECO:0007669"/>
    <property type="project" value="InterPro"/>
</dbReference>
<dbReference type="GO" id="GO:0015503">
    <property type="term" value="F:glutathione-regulated potassium exporter activity"/>
    <property type="evidence" value="ECO:0007669"/>
    <property type="project" value="UniProtKB-UniRule"/>
</dbReference>
<dbReference type="GO" id="GO:0015643">
    <property type="term" value="F:toxic substance binding"/>
    <property type="evidence" value="ECO:0007669"/>
    <property type="project" value="InterPro"/>
</dbReference>
<dbReference type="GO" id="GO:1902600">
    <property type="term" value="P:proton transmembrane transport"/>
    <property type="evidence" value="ECO:0007669"/>
    <property type="project" value="InterPro"/>
</dbReference>
<dbReference type="GO" id="GO:0051595">
    <property type="term" value="P:response to methylglyoxal"/>
    <property type="evidence" value="ECO:0007669"/>
    <property type="project" value="InterPro"/>
</dbReference>
<dbReference type="FunFam" id="1.20.1530.20:FF:000001">
    <property type="entry name" value="Glutathione-regulated potassium-efflux system protein KefB"/>
    <property type="match status" value="1"/>
</dbReference>
<dbReference type="FunFam" id="3.40.50.720:FF:000036">
    <property type="entry name" value="Glutathione-regulated potassium-efflux system protein KefB"/>
    <property type="match status" value="1"/>
</dbReference>
<dbReference type="Gene3D" id="1.20.1530.20">
    <property type="match status" value="1"/>
</dbReference>
<dbReference type="Gene3D" id="3.40.50.720">
    <property type="entry name" value="NAD(P)-binding Rossmann-like Domain"/>
    <property type="match status" value="1"/>
</dbReference>
<dbReference type="HAMAP" id="MF_01413">
    <property type="entry name" value="K_H_efflux_KefC"/>
    <property type="match status" value="1"/>
</dbReference>
<dbReference type="InterPro" id="IPR006153">
    <property type="entry name" value="Cation/H_exchanger_TM"/>
</dbReference>
<dbReference type="InterPro" id="IPR004771">
    <property type="entry name" value="K/H_exchanger"/>
</dbReference>
<dbReference type="InterPro" id="IPR023941">
    <property type="entry name" value="K_H_efflux_KefC"/>
</dbReference>
<dbReference type="InterPro" id="IPR006036">
    <property type="entry name" value="K_uptake_TrkA"/>
</dbReference>
<dbReference type="InterPro" id="IPR038770">
    <property type="entry name" value="Na+/solute_symporter_sf"/>
</dbReference>
<dbReference type="InterPro" id="IPR036291">
    <property type="entry name" value="NAD(P)-bd_dom_sf"/>
</dbReference>
<dbReference type="InterPro" id="IPR003148">
    <property type="entry name" value="RCK_N"/>
</dbReference>
<dbReference type="NCBIfam" id="TIGR00932">
    <property type="entry name" value="2a37"/>
    <property type="match status" value="1"/>
</dbReference>
<dbReference type="NCBIfam" id="NF002924">
    <property type="entry name" value="PRK03562.1"/>
    <property type="match status" value="1"/>
</dbReference>
<dbReference type="PANTHER" id="PTHR46157:SF3">
    <property type="entry name" value="GLUTATHIONE-REGULATED POTASSIUM-EFFLUX SYSTEM PROTEIN KEFC"/>
    <property type="match status" value="1"/>
</dbReference>
<dbReference type="PANTHER" id="PTHR46157">
    <property type="entry name" value="K(+) EFFLUX ANTIPORTER 3, CHLOROPLASTIC"/>
    <property type="match status" value="1"/>
</dbReference>
<dbReference type="Pfam" id="PF00999">
    <property type="entry name" value="Na_H_Exchanger"/>
    <property type="match status" value="1"/>
</dbReference>
<dbReference type="Pfam" id="PF02254">
    <property type="entry name" value="TrkA_N"/>
    <property type="match status" value="1"/>
</dbReference>
<dbReference type="PRINTS" id="PR00335">
    <property type="entry name" value="KUPTAKETRKA"/>
</dbReference>
<dbReference type="SUPFAM" id="SSF51735">
    <property type="entry name" value="NAD(P)-binding Rossmann-fold domains"/>
    <property type="match status" value="1"/>
</dbReference>
<dbReference type="PROSITE" id="PS51201">
    <property type="entry name" value="RCK_N"/>
    <property type="match status" value="1"/>
</dbReference>
<proteinExistence type="inferred from homology"/>
<accession>A9MYL9</accession>
<reference key="1">
    <citation type="submission" date="2007-11" db="EMBL/GenBank/DDBJ databases">
        <authorList>
            <consortium name="The Salmonella enterica serovar Paratyphi B Genome Sequencing Project"/>
            <person name="McClelland M."/>
            <person name="Sanderson E.K."/>
            <person name="Porwollik S."/>
            <person name="Spieth J."/>
            <person name="Clifton W.S."/>
            <person name="Fulton R."/>
            <person name="Cordes M."/>
            <person name="Wollam A."/>
            <person name="Shah N."/>
            <person name="Pepin K."/>
            <person name="Bhonagiri V."/>
            <person name="Nash W."/>
            <person name="Johnson M."/>
            <person name="Thiruvilangam P."/>
            <person name="Wilson R."/>
        </authorList>
    </citation>
    <scope>NUCLEOTIDE SEQUENCE [LARGE SCALE GENOMIC DNA]</scope>
    <source>
        <strain>ATCC BAA-1250 / SPB7</strain>
    </source>
</reference>
<organism>
    <name type="scientific">Salmonella paratyphi B (strain ATCC BAA-1250 / SPB7)</name>
    <dbReference type="NCBI Taxonomy" id="1016998"/>
    <lineage>
        <taxon>Bacteria</taxon>
        <taxon>Pseudomonadati</taxon>
        <taxon>Pseudomonadota</taxon>
        <taxon>Gammaproteobacteria</taxon>
        <taxon>Enterobacterales</taxon>
        <taxon>Enterobacteriaceae</taxon>
        <taxon>Salmonella</taxon>
    </lineage>
</organism>
<feature type="chain" id="PRO_1000087396" description="Glutathione-regulated potassium-efflux system protein KefC">
    <location>
        <begin position="1"/>
        <end position="620"/>
    </location>
</feature>
<feature type="transmembrane region" description="Helical" evidence="1">
    <location>
        <begin position="4"/>
        <end position="24"/>
    </location>
</feature>
<feature type="transmembrane region" description="Helical" evidence="1">
    <location>
        <begin position="26"/>
        <end position="46"/>
    </location>
</feature>
<feature type="transmembrane region" description="Helical" evidence="1">
    <location>
        <begin position="54"/>
        <end position="74"/>
    </location>
</feature>
<feature type="transmembrane region" description="Helical" evidence="1">
    <location>
        <begin position="90"/>
        <end position="110"/>
    </location>
</feature>
<feature type="transmembrane region" description="Helical" evidence="1">
    <location>
        <begin position="114"/>
        <end position="134"/>
    </location>
</feature>
<feature type="transmembrane region" description="Helical" evidence="1">
    <location>
        <begin position="149"/>
        <end position="169"/>
    </location>
</feature>
<feature type="transmembrane region" description="Helical" evidence="1">
    <location>
        <begin position="178"/>
        <end position="198"/>
    </location>
</feature>
<feature type="transmembrane region" description="Helical" evidence="1">
    <location>
        <begin position="218"/>
        <end position="238"/>
    </location>
</feature>
<feature type="transmembrane region" description="Helical" evidence="1">
    <location>
        <begin position="270"/>
        <end position="290"/>
    </location>
</feature>
<feature type="transmembrane region" description="Helical" evidence="1">
    <location>
        <begin position="294"/>
        <end position="314"/>
    </location>
</feature>
<feature type="transmembrane region" description="Helical" evidence="1">
    <location>
        <begin position="327"/>
        <end position="347"/>
    </location>
</feature>
<feature type="transmembrane region" description="Helical" evidence="1">
    <location>
        <begin position="359"/>
        <end position="379"/>
    </location>
</feature>
<feature type="domain" description="RCK N-terminal" evidence="2">
    <location>
        <begin position="399"/>
        <end position="518"/>
    </location>
</feature>
<feature type="region of interest" description="Disordered" evidence="3">
    <location>
        <begin position="599"/>
        <end position="620"/>
    </location>
</feature>
<evidence type="ECO:0000255" key="1">
    <source>
        <dbReference type="HAMAP-Rule" id="MF_01413"/>
    </source>
</evidence>
<evidence type="ECO:0000255" key="2">
    <source>
        <dbReference type="PROSITE-ProRule" id="PRU00543"/>
    </source>
</evidence>
<evidence type="ECO:0000256" key="3">
    <source>
        <dbReference type="SAM" id="MobiDB-lite"/>
    </source>
</evidence>
<protein>
    <recommendedName>
        <fullName evidence="1">Glutathione-regulated potassium-efflux system protein KefC</fullName>
    </recommendedName>
    <alternativeName>
        <fullName evidence="1">K(+)/H(+) antiporter</fullName>
    </alternativeName>
</protein>
<gene>
    <name evidence="1" type="primary">kefC</name>
    <name type="ordered locus">SPAB_00110</name>
</gene>
<sequence>MDSHTLLQALIYLGSAALIVPIAVRLGLGSVLGYLIAGCIIGPWGLRLVTDAESILHFAEIGVVLMLFVIGLELDPQRLWKLRASVFGGGALQMVVCGGLIGLFCMFLGLRWQVAELIGMTLALSSTAIAMQAMNERNLTVSQVGRSAFAVLLFQDIAAIPLVAMIPLLAASGASTTLGAFALSALKVAGALALVVVLGRYVTRPALRFVARSGLREVFSAVALFLVFGFGLLLEEVGLSMAMGAFLAGVLLASSEYRHALESDIEPFKGLLLGLFFIGVGMSIDFGTLVENPLRILLLLAGFLAIKIVMLWLVARPLGVPAKQRRWFAVLLGQGSEFAFVVFGAAQMADVLEPEWAKALTLAVALSMAATPIFLVLLTRMEKTATGEAREADEIDEEQPRVIVAGFGRFGQIAGRLLLSSGVKMVVLDHDPDHIETLRKFGMKVFYGDATRMDLLESAGAAKAEVLINAIDDPQTNLQLSELVKSHFPHLQIIARARDVDHYIRLRQAGVAMPERETFEGALKSGRQALEALGLGRYEARERADLFRHFNTRMVEEMAKGENDPLSRAAAYKRTSAMLSEIITEDREHLSLIQRHGWQGTAEGKHSGEVADEPEVKPSI</sequence>
<comment type="function">
    <text evidence="1">Pore-forming subunit of a potassium efflux system that confers protection against electrophiles. Catalyzes K(+)/H(+) antiport.</text>
</comment>
<comment type="subunit">
    <text evidence="1">Homodimer. Interacts with the regulatory subunit KefF.</text>
</comment>
<comment type="subcellular location">
    <subcellularLocation>
        <location evidence="1">Cell inner membrane</location>
        <topology evidence="1">Multi-pass membrane protein</topology>
    </subcellularLocation>
</comment>
<comment type="similarity">
    <text evidence="1">Belongs to the monovalent cation:proton antiporter 2 (CPA2) transporter (TC 2.A.37) family. KefC subfamily.</text>
</comment>
<name>KEFC_SALPB</name>
<keyword id="KW-0050">Antiport</keyword>
<keyword id="KW-0997">Cell inner membrane</keyword>
<keyword id="KW-1003">Cell membrane</keyword>
<keyword id="KW-0406">Ion transport</keyword>
<keyword id="KW-0472">Membrane</keyword>
<keyword id="KW-0630">Potassium</keyword>
<keyword id="KW-0633">Potassium transport</keyword>
<keyword id="KW-0812">Transmembrane</keyword>
<keyword id="KW-1133">Transmembrane helix</keyword>
<keyword id="KW-0813">Transport</keyword>